<gene>
    <name type="primary">yfhR</name>
    <name type="ordered locus">b2534</name>
    <name type="ordered locus">JW2518</name>
</gene>
<evidence type="ECO:0000255" key="1"/>
<evidence type="ECO:0000305" key="2"/>
<organism>
    <name type="scientific">Escherichia coli (strain K12)</name>
    <dbReference type="NCBI Taxonomy" id="83333"/>
    <lineage>
        <taxon>Bacteria</taxon>
        <taxon>Pseudomonadati</taxon>
        <taxon>Pseudomonadota</taxon>
        <taxon>Gammaproteobacteria</taxon>
        <taxon>Enterobacterales</taxon>
        <taxon>Enterobacteriaceae</taxon>
        <taxon>Escherichia</taxon>
    </lineage>
</organism>
<keyword id="KW-0472">Membrane</keyword>
<keyword id="KW-1185">Reference proteome</keyword>
<keyword id="KW-0812">Transmembrane</keyword>
<keyword id="KW-1133">Transmembrane helix</keyword>
<sequence>MALPVNKRVPKILFILFVVAFCVYLVPRVAINFFYYPDDKIYGPDPWSAESVEFTAKDGTRLQGWFIPSSTGPADNAIATIIHAHGNAGNMSAHWPLVSWLPERNFNVFMFDYRGFGKSKGTPSQAGLLDDTQSAINVVRHRSDVNPQRLVLFGQSIGGANILDVIGRGDREGIRAVILDSTFASYATIANQMIPGSGYLLDESYSGENYIASVSPIPLLLIHGKADHVIPWQHSEKLYSLAKEPKRLILIPDGEHIDAFSDRHGDVYREQMVDFILSALNPQN</sequence>
<protein>
    <recommendedName>
        <fullName>Uncharacterized protein YfhR</fullName>
    </recommendedName>
</protein>
<accession>P77538</accession>
<reference key="1">
    <citation type="journal article" date="1997" name="DNA Res.">
        <title>Construction of a contiguous 874-kb sequence of the Escherichia coli-K12 genome corresponding to 50.0-68.8 min on the linkage map and analysis of its sequence features.</title>
        <authorList>
            <person name="Yamamoto Y."/>
            <person name="Aiba H."/>
            <person name="Baba T."/>
            <person name="Hayashi K."/>
            <person name="Inada T."/>
            <person name="Isono K."/>
            <person name="Itoh T."/>
            <person name="Kimura S."/>
            <person name="Kitagawa M."/>
            <person name="Makino K."/>
            <person name="Miki T."/>
            <person name="Mitsuhashi N."/>
            <person name="Mizobuchi K."/>
            <person name="Mori H."/>
            <person name="Nakade S."/>
            <person name="Nakamura Y."/>
            <person name="Nashimoto H."/>
            <person name="Oshima T."/>
            <person name="Oyama S."/>
            <person name="Saito N."/>
            <person name="Sampei G."/>
            <person name="Satoh Y."/>
            <person name="Sivasundaram S."/>
            <person name="Tagami H."/>
            <person name="Takahashi H."/>
            <person name="Takeda J."/>
            <person name="Takemoto K."/>
            <person name="Uehara K."/>
            <person name="Wada C."/>
            <person name="Yamagata S."/>
            <person name="Horiuchi T."/>
        </authorList>
    </citation>
    <scope>NUCLEOTIDE SEQUENCE [LARGE SCALE GENOMIC DNA]</scope>
    <source>
        <strain>K12 / W3110 / ATCC 27325 / DSM 5911</strain>
    </source>
</reference>
<reference key="2">
    <citation type="journal article" date="1997" name="Science">
        <title>The complete genome sequence of Escherichia coli K-12.</title>
        <authorList>
            <person name="Blattner F.R."/>
            <person name="Plunkett G. III"/>
            <person name="Bloch C.A."/>
            <person name="Perna N.T."/>
            <person name="Burland V."/>
            <person name="Riley M."/>
            <person name="Collado-Vides J."/>
            <person name="Glasner J.D."/>
            <person name="Rode C.K."/>
            <person name="Mayhew G.F."/>
            <person name="Gregor J."/>
            <person name="Davis N.W."/>
            <person name="Kirkpatrick H.A."/>
            <person name="Goeden M.A."/>
            <person name="Rose D.J."/>
            <person name="Mau B."/>
            <person name="Shao Y."/>
        </authorList>
    </citation>
    <scope>NUCLEOTIDE SEQUENCE [LARGE SCALE GENOMIC DNA]</scope>
    <source>
        <strain>K12 / MG1655 / ATCC 47076</strain>
    </source>
</reference>
<reference key="3">
    <citation type="journal article" date="2006" name="Mol. Syst. Biol.">
        <title>Highly accurate genome sequences of Escherichia coli K-12 strains MG1655 and W3110.</title>
        <authorList>
            <person name="Hayashi K."/>
            <person name="Morooka N."/>
            <person name="Yamamoto Y."/>
            <person name="Fujita K."/>
            <person name="Isono K."/>
            <person name="Choi S."/>
            <person name="Ohtsubo E."/>
            <person name="Baba T."/>
            <person name="Wanner B.L."/>
            <person name="Mori H."/>
            <person name="Horiuchi T."/>
        </authorList>
    </citation>
    <scope>NUCLEOTIDE SEQUENCE [LARGE SCALE GENOMIC DNA]</scope>
    <source>
        <strain>K12 / W3110 / ATCC 27325 / DSM 5911</strain>
    </source>
</reference>
<dbReference type="EMBL" id="U00096">
    <property type="protein sequence ID" value="AAC75587.2"/>
    <property type="molecule type" value="Genomic_DNA"/>
</dbReference>
<dbReference type="EMBL" id="AP009048">
    <property type="protein sequence ID" value="BAA16428.1"/>
    <property type="status" value="ALT_INIT"/>
    <property type="molecule type" value="Genomic_DNA"/>
</dbReference>
<dbReference type="PIR" id="E65030">
    <property type="entry name" value="E65030"/>
</dbReference>
<dbReference type="RefSeq" id="NP_417029.4">
    <property type="nucleotide sequence ID" value="NC_000913.3"/>
</dbReference>
<dbReference type="RefSeq" id="WP_001297705.1">
    <property type="nucleotide sequence ID" value="NZ_LN832404.1"/>
</dbReference>
<dbReference type="SMR" id="P77538"/>
<dbReference type="BioGRID" id="4260968">
    <property type="interactions" value="25"/>
</dbReference>
<dbReference type="FunCoup" id="P77538">
    <property type="interactions" value="596"/>
</dbReference>
<dbReference type="IntAct" id="P77538">
    <property type="interactions" value="5"/>
</dbReference>
<dbReference type="STRING" id="511145.b2534"/>
<dbReference type="ESTHER" id="ecoli-YfhR">
    <property type="family name" value="ABHD13-BEM46"/>
</dbReference>
<dbReference type="MEROPS" id="S09.A36"/>
<dbReference type="PaxDb" id="511145-b2534"/>
<dbReference type="EnsemblBacteria" id="AAC75587">
    <property type="protein sequence ID" value="AAC75587"/>
    <property type="gene ID" value="b2534"/>
</dbReference>
<dbReference type="GeneID" id="945059"/>
<dbReference type="KEGG" id="ecj:JW2518"/>
<dbReference type="KEGG" id="eco:b2534"/>
<dbReference type="KEGG" id="ecoc:C3026_14040"/>
<dbReference type="PATRIC" id="fig|1411691.4.peg.4200"/>
<dbReference type="EchoBASE" id="EB3226"/>
<dbReference type="eggNOG" id="COG1073">
    <property type="taxonomic scope" value="Bacteria"/>
</dbReference>
<dbReference type="HOGENOM" id="CLU_029375_2_1_6"/>
<dbReference type="InParanoid" id="P77538"/>
<dbReference type="OMA" id="QYWTSED"/>
<dbReference type="OrthoDB" id="9805123at2"/>
<dbReference type="PhylomeDB" id="P77538"/>
<dbReference type="BioCyc" id="EcoCyc:G7328-MONOMER"/>
<dbReference type="PRO" id="PR:P77538"/>
<dbReference type="Proteomes" id="UP000000625">
    <property type="component" value="Chromosome"/>
</dbReference>
<dbReference type="GO" id="GO:0016020">
    <property type="term" value="C:membrane"/>
    <property type="evidence" value="ECO:0007669"/>
    <property type="project" value="UniProtKB-SubCell"/>
</dbReference>
<dbReference type="Gene3D" id="3.40.50.1820">
    <property type="entry name" value="alpha/beta hydrolase"/>
    <property type="match status" value="1"/>
</dbReference>
<dbReference type="InterPro" id="IPR029058">
    <property type="entry name" value="AB_hydrolase_fold"/>
</dbReference>
<dbReference type="InterPro" id="IPR022742">
    <property type="entry name" value="Hydrolase_4"/>
</dbReference>
<dbReference type="PANTHER" id="PTHR12277">
    <property type="entry name" value="ALPHA/BETA HYDROLASE DOMAIN-CONTAINING PROTEIN"/>
    <property type="match status" value="1"/>
</dbReference>
<dbReference type="PANTHER" id="PTHR12277:SF81">
    <property type="entry name" value="PROTEIN ABHD13"/>
    <property type="match status" value="1"/>
</dbReference>
<dbReference type="Pfam" id="PF12146">
    <property type="entry name" value="Hydrolase_4"/>
    <property type="match status" value="1"/>
</dbReference>
<dbReference type="SUPFAM" id="SSF53474">
    <property type="entry name" value="alpha/beta-Hydrolases"/>
    <property type="match status" value="1"/>
</dbReference>
<comment type="subcellular location">
    <subcellularLocation>
        <location evidence="2">Membrane</location>
        <topology evidence="2">Single-pass membrane protein</topology>
    </subcellularLocation>
</comment>
<comment type="similarity">
    <text evidence="2">Belongs to the serine esterase family.</text>
</comment>
<comment type="sequence caution" evidence="2">
    <conflict type="erroneous initiation">
        <sequence resource="EMBL-CDS" id="BAA16428"/>
    </conflict>
</comment>
<proteinExistence type="inferred from homology"/>
<feature type="chain" id="PRO_0000169252" description="Uncharacterized protein YfhR">
    <location>
        <begin position="1"/>
        <end position="284"/>
    </location>
</feature>
<feature type="transmembrane region" description="Helical" evidence="1">
    <location>
        <begin position="12"/>
        <end position="32"/>
    </location>
</feature>
<name>YFHR_ECOLI</name>